<gene>
    <name evidence="1" type="primary">xseB</name>
    <name type="ordered locus">STER_1183</name>
</gene>
<proteinExistence type="inferred from homology"/>
<reference key="1">
    <citation type="journal article" date="2006" name="Proc. Natl. Acad. Sci. U.S.A.">
        <title>Comparative genomics of the lactic acid bacteria.</title>
        <authorList>
            <person name="Makarova K.S."/>
            <person name="Slesarev A."/>
            <person name="Wolf Y.I."/>
            <person name="Sorokin A."/>
            <person name="Mirkin B."/>
            <person name="Koonin E.V."/>
            <person name="Pavlov A."/>
            <person name="Pavlova N."/>
            <person name="Karamychev V."/>
            <person name="Polouchine N."/>
            <person name="Shakhova V."/>
            <person name="Grigoriev I."/>
            <person name="Lou Y."/>
            <person name="Rohksar D."/>
            <person name="Lucas S."/>
            <person name="Huang K."/>
            <person name="Goodstein D.M."/>
            <person name="Hawkins T."/>
            <person name="Plengvidhya V."/>
            <person name="Welker D."/>
            <person name="Hughes J."/>
            <person name="Goh Y."/>
            <person name="Benson A."/>
            <person name="Baldwin K."/>
            <person name="Lee J.-H."/>
            <person name="Diaz-Muniz I."/>
            <person name="Dosti B."/>
            <person name="Smeianov V."/>
            <person name="Wechter W."/>
            <person name="Barabote R."/>
            <person name="Lorca G."/>
            <person name="Altermann E."/>
            <person name="Barrangou R."/>
            <person name="Ganesan B."/>
            <person name="Xie Y."/>
            <person name="Rawsthorne H."/>
            <person name="Tamir D."/>
            <person name="Parker C."/>
            <person name="Breidt F."/>
            <person name="Broadbent J.R."/>
            <person name="Hutkins R."/>
            <person name="O'Sullivan D."/>
            <person name="Steele J."/>
            <person name="Unlu G."/>
            <person name="Saier M.H. Jr."/>
            <person name="Klaenhammer T."/>
            <person name="Richardson P."/>
            <person name="Kozyavkin S."/>
            <person name="Weimer B.C."/>
            <person name="Mills D.A."/>
        </authorList>
    </citation>
    <scope>NUCLEOTIDE SEQUENCE [LARGE SCALE GENOMIC DNA]</scope>
    <source>
        <strain>ATCC BAA-491 / LMD-9</strain>
    </source>
</reference>
<comment type="function">
    <text evidence="1">Bidirectionally degrades single-stranded DNA into large acid-insoluble oligonucleotides, which are then degraded further into small acid-soluble oligonucleotides.</text>
</comment>
<comment type="catalytic activity">
    <reaction evidence="1">
        <text>Exonucleolytic cleavage in either 5'- to 3'- or 3'- to 5'-direction to yield nucleoside 5'-phosphates.</text>
        <dbReference type="EC" id="3.1.11.6"/>
    </reaction>
</comment>
<comment type="subunit">
    <text evidence="1">Heterooligomer composed of large and small subunits.</text>
</comment>
<comment type="subcellular location">
    <subcellularLocation>
        <location evidence="1">Cytoplasm</location>
    </subcellularLocation>
</comment>
<comment type="similarity">
    <text evidence="1">Belongs to the XseB family.</text>
</comment>
<sequence length="71" mass="7895">MSTKKTFEENLQDLEAIVTKLETGDVALEDAIAEFQKGMVLSKDLQKTLEDAEKTLVKVMQADGTEMEMDA</sequence>
<accession>Q03K99</accession>
<evidence type="ECO:0000255" key="1">
    <source>
        <dbReference type="HAMAP-Rule" id="MF_00337"/>
    </source>
</evidence>
<protein>
    <recommendedName>
        <fullName evidence="1">Exodeoxyribonuclease 7 small subunit</fullName>
        <ecNumber evidence="1">3.1.11.6</ecNumber>
    </recommendedName>
    <alternativeName>
        <fullName evidence="1">Exodeoxyribonuclease VII small subunit</fullName>
        <shortName evidence="1">Exonuclease VII small subunit</shortName>
    </alternativeName>
</protein>
<keyword id="KW-0963">Cytoplasm</keyword>
<keyword id="KW-0269">Exonuclease</keyword>
<keyword id="KW-0378">Hydrolase</keyword>
<keyword id="KW-0540">Nuclease</keyword>
<name>EX7S_STRTD</name>
<feature type="chain" id="PRO_0000303765" description="Exodeoxyribonuclease 7 small subunit">
    <location>
        <begin position="1"/>
        <end position="71"/>
    </location>
</feature>
<organism>
    <name type="scientific">Streptococcus thermophilus (strain ATCC BAA-491 / LMD-9)</name>
    <dbReference type="NCBI Taxonomy" id="322159"/>
    <lineage>
        <taxon>Bacteria</taxon>
        <taxon>Bacillati</taxon>
        <taxon>Bacillota</taxon>
        <taxon>Bacilli</taxon>
        <taxon>Lactobacillales</taxon>
        <taxon>Streptococcaceae</taxon>
        <taxon>Streptococcus</taxon>
    </lineage>
</organism>
<dbReference type="EC" id="3.1.11.6" evidence="1"/>
<dbReference type="EMBL" id="CP000419">
    <property type="protein sequence ID" value="ABJ66373.1"/>
    <property type="molecule type" value="Genomic_DNA"/>
</dbReference>
<dbReference type="RefSeq" id="WP_002951008.1">
    <property type="nucleotide sequence ID" value="NZ_CP086001.1"/>
</dbReference>
<dbReference type="SMR" id="Q03K99"/>
<dbReference type="KEGG" id="ste:STER_1183"/>
<dbReference type="HOGENOM" id="CLU_145918_3_2_9"/>
<dbReference type="GO" id="GO:0005829">
    <property type="term" value="C:cytosol"/>
    <property type="evidence" value="ECO:0007669"/>
    <property type="project" value="TreeGrafter"/>
</dbReference>
<dbReference type="GO" id="GO:0009318">
    <property type="term" value="C:exodeoxyribonuclease VII complex"/>
    <property type="evidence" value="ECO:0007669"/>
    <property type="project" value="InterPro"/>
</dbReference>
<dbReference type="GO" id="GO:0008855">
    <property type="term" value="F:exodeoxyribonuclease VII activity"/>
    <property type="evidence" value="ECO:0007669"/>
    <property type="project" value="UniProtKB-UniRule"/>
</dbReference>
<dbReference type="GO" id="GO:0006308">
    <property type="term" value="P:DNA catabolic process"/>
    <property type="evidence" value="ECO:0007669"/>
    <property type="project" value="UniProtKB-UniRule"/>
</dbReference>
<dbReference type="Gene3D" id="1.10.287.1040">
    <property type="entry name" value="Exonuclease VII, small subunit"/>
    <property type="match status" value="1"/>
</dbReference>
<dbReference type="HAMAP" id="MF_00337">
    <property type="entry name" value="Exonuc_7_S"/>
    <property type="match status" value="1"/>
</dbReference>
<dbReference type="InterPro" id="IPR003761">
    <property type="entry name" value="Exonuc_VII_S"/>
</dbReference>
<dbReference type="InterPro" id="IPR037004">
    <property type="entry name" value="Exonuc_VII_ssu_sf"/>
</dbReference>
<dbReference type="NCBIfam" id="NF002138">
    <property type="entry name" value="PRK00977.1-2"/>
    <property type="match status" value="1"/>
</dbReference>
<dbReference type="NCBIfam" id="TIGR01280">
    <property type="entry name" value="xseB"/>
    <property type="match status" value="1"/>
</dbReference>
<dbReference type="PANTHER" id="PTHR34137">
    <property type="entry name" value="EXODEOXYRIBONUCLEASE 7 SMALL SUBUNIT"/>
    <property type="match status" value="1"/>
</dbReference>
<dbReference type="PANTHER" id="PTHR34137:SF1">
    <property type="entry name" value="EXODEOXYRIBONUCLEASE 7 SMALL SUBUNIT"/>
    <property type="match status" value="1"/>
</dbReference>
<dbReference type="Pfam" id="PF02609">
    <property type="entry name" value="Exonuc_VII_S"/>
    <property type="match status" value="1"/>
</dbReference>
<dbReference type="PIRSF" id="PIRSF006488">
    <property type="entry name" value="Exonuc_VII_S"/>
    <property type="match status" value="1"/>
</dbReference>
<dbReference type="SUPFAM" id="SSF116842">
    <property type="entry name" value="XseB-like"/>
    <property type="match status" value="1"/>
</dbReference>